<comment type="function">
    <text evidence="1">Possibly the antitoxin component of a type II toxin-antitoxin (TA) system.</text>
</comment>
<comment type="similarity">
    <text evidence="1">Belongs to the UPF0165 family.</text>
</comment>
<gene>
    <name type="ordered locus">PYRAB11980</name>
    <name type="ORF">PAB3298</name>
</gene>
<accession>Q9UZF0</accession>
<accession>G8ZKI9</accession>
<dbReference type="EMBL" id="AJ248286">
    <property type="protein sequence ID" value="CAB50109.1"/>
    <property type="molecule type" value="Genomic_DNA"/>
</dbReference>
<dbReference type="EMBL" id="HE613800">
    <property type="protein sequence ID" value="CCE70632.1"/>
    <property type="molecule type" value="Genomic_DNA"/>
</dbReference>
<dbReference type="PIR" id="H75100">
    <property type="entry name" value="H75100"/>
</dbReference>
<dbReference type="RefSeq" id="WP_010868316.1">
    <property type="nucleotide sequence ID" value="NC_000868.1"/>
</dbReference>
<dbReference type="KEGG" id="pab:PAB3298"/>
<dbReference type="PATRIC" id="fig|272844.11.peg.1275"/>
<dbReference type="eggNOG" id="arCOG03880">
    <property type="taxonomic scope" value="Archaea"/>
</dbReference>
<dbReference type="HOGENOM" id="CLU_200885_0_0_2"/>
<dbReference type="OrthoDB" id="116241at2157"/>
<dbReference type="PhylomeDB" id="Q9UZF0"/>
<dbReference type="Proteomes" id="UP000000810">
    <property type="component" value="Chromosome"/>
</dbReference>
<dbReference type="Proteomes" id="UP000009139">
    <property type="component" value="Chromosome"/>
</dbReference>
<dbReference type="Gene3D" id="4.10.1150.10">
    <property type="entry name" value="AF2212/PG0164-like"/>
    <property type="match status" value="1"/>
</dbReference>
<dbReference type="InterPro" id="IPR008203">
    <property type="entry name" value="AF2212-like"/>
</dbReference>
<dbReference type="InterPro" id="IPR024069">
    <property type="entry name" value="AF2212-like_dom_sf"/>
</dbReference>
<dbReference type="Pfam" id="PF01954">
    <property type="entry name" value="AF2212-like"/>
    <property type="match status" value="1"/>
</dbReference>
<dbReference type="SUPFAM" id="SSF141694">
    <property type="entry name" value="AF2212/PG0164-like"/>
    <property type="match status" value="1"/>
</dbReference>
<protein>
    <recommendedName>
        <fullName>Putative antitoxin PYRAB11980</fullName>
    </recommendedName>
</protein>
<keyword id="KW-1277">Toxin-antitoxin system</keyword>
<feature type="chain" id="PRO_0000156861" description="Putative antitoxin PYRAB11980">
    <location>
        <begin position="1"/>
        <end position="61"/>
    </location>
</feature>
<organism>
    <name type="scientific">Pyrococcus abyssi (strain GE5 / Orsay)</name>
    <dbReference type="NCBI Taxonomy" id="272844"/>
    <lineage>
        <taxon>Archaea</taxon>
        <taxon>Methanobacteriati</taxon>
        <taxon>Methanobacteriota</taxon>
        <taxon>Thermococci</taxon>
        <taxon>Thermococcales</taxon>
        <taxon>Thermococcaceae</taxon>
        <taxon>Pyrococcus</taxon>
    </lineage>
</organism>
<sequence>MEVIEVVYEDGVFKPLKKIKLKEGTRGVVVVRLPKQISEIAKKYRIKVREDVLEEFLEERR</sequence>
<name>Y1198_PYRAB</name>
<proteinExistence type="inferred from homology"/>
<evidence type="ECO:0000305" key="1"/>
<reference key="1">
    <citation type="journal article" date="2003" name="Mol. Microbiol.">
        <title>An integrated analysis of the genome of the hyperthermophilic archaeon Pyrococcus abyssi.</title>
        <authorList>
            <person name="Cohen G.N."/>
            <person name="Barbe V."/>
            <person name="Flament D."/>
            <person name="Galperin M."/>
            <person name="Heilig R."/>
            <person name="Lecompte O."/>
            <person name="Poch O."/>
            <person name="Prieur D."/>
            <person name="Querellou J."/>
            <person name="Ripp R."/>
            <person name="Thierry J.-C."/>
            <person name="Van der Oost J."/>
            <person name="Weissenbach J."/>
            <person name="Zivanovic Y."/>
            <person name="Forterre P."/>
        </authorList>
    </citation>
    <scope>NUCLEOTIDE SEQUENCE [LARGE SCALE GENOMIC DNA]</scope>
    <source>
        <strain>GE5 / Orsay</strain>
    </source>
</reference>
<reference key="2">
    <citation type="journal article" date="2012" name="Curr. Microbiol.">
        <title>Re-annotation of two hyperthermophilic archaea Pyrococcus abyssi GE5 and Pyrococcus furiosus DSM 3638.</title>
        <authorList>
            <person name="Gao J."/>
            <person name="Wang J."/>
        </authorList>
    </citation>
    <scope>GENOME REANNOTATION</scope>
    <source>
        <strain>GE5 / Orsay</strain>
    </source>
</reference>